<evidence type="ECO:0000250" key="1">
    <source>
        <dbReference type="UniProtKB" id="P46663"/>
    </source>
</evidence>
<evidence type="ECO:0000255" key="2"/>
<evidence type="ECO:0000255" key="3">
    <source>
        <dbReference type="PROSITE-ProRule" id="PRU00521"/>
    </source>
</evidence>
<dbReference type="EMBL" id="AF540786">
    <property type="protein sequence ID" value="AAN16465.1"/>
    <property type="molecule type" value="Genomic_DNA"/>
</dbReference>
<dbReference type="SMR" id="Q8HZP1"/>
<dbReference type="GlyCosmos" id="Q8HZP1">
    <property type="glycosylation" value="3 sites, No reported glycans"/>
</dbReference>
<dbReference type="GO" id="GO:0009897">
    <property type="term" value="C:external side of plasma membrane"/>
    <property type="evidence" value="ECO:0007669"/>
    <property type="project" value="TreeGrafter"/>
</dbReference>
<dbReference type="GO" id="GO:0004947">
    <property type="term" value="F:bradykinin receptor activity"/>
    <property type="evidence" value="ECO:0007669"/>
    <property type="project" value="InterPro"/>
</dbReference>
<dbReference type="GO" id="GO:0019957">
    <property type="term" value="F:C-C chemokine binding"/>
    <property type="evidence" value="ECO:0007669"/>
    <property type="project" value="TreeGrafter"/>
</dbReference>
<dbReference type="GO" id="GO:0016493">
    <property type="term" value="F:C-C chemokine receptor activity"/>
    <property type="evidence" value="ECO:0007669"/>
    <property type="project" value="TreeGrafter"/>
</dbReference>
<dbReference type="GO" id="GO:0019722">
    <property type="term" value="P:calcium-mediated signaling"/>
    <property type="evidence" value="ECO:0007669"/>
    <property type="project" value="TreeGrafter"/>
</dbReference>
<dbReference type="GO" id="GO:0060326">
    <property type="term" value="P:cell chemotaxis"/>
    <property type="evidence" value="ECO:0007669"/>
    <property type="project" value="TreeGrafter"/>
</dbReference>
<dbReference type="GO" id="GO:0006955">
    <property type="term" value="P:immune response"/>
    <property type="evidence" value="ECO:0007669"/>
    <property type="project" value="TreeGrafter"/>
</dbReference>
<dbReference type="GO" id="GO:0006954">
    <property type="term" value="P:inflammatory response"/>
    <property type="evidence" value="ECO:0007669"/>
    <property type="project" value="InterPro"/>
</dbReference>
<dbReference type="GO" id="GO:0007204">
    <property type="term" value="P:positive regulation of cytosolic calcium ion concentration"/>
    <property type="evidence" value="ECO:0007669"/>
    <property type="project" value="TreeGrafter"/>
</dbReference>
<dbReference type="GO" id="GO:0009612">
    <property type="term" value="P:response to mechanical stimulus"/>
    <property type="evidence" value="ECO:0007669"/>
    <property type="project" value="InterPro"/>
</dbReference>
<dbReference type="FunFam" id="1.20.1070.10:FF:000295">
    <property type="entry name" value="B1 bradykinin receptor"/>
    <property type="match status" value="1"/>
</dbReference>
<dbReference type="Gene3D" id="1.20.1070.10">
    <property type="entry name" value="Rhodopsin 7-helix transmembrane proteins"/>
    <property type="match status" value="1"/>
</dbReference>
<dbReference type="InterPro" id="IPR001186">
    <property type="entry name" value="Brdyknn_1_rcpt"/>
</dbReference>
<dbReference type="InterPro" id="IPR000496">
    <property type="entry name" value="Brdyknn_rcpt"/>
</dbReference>
<dbReference type="InterPro" id="IPR050119">
    <property type="entry name" value="CCR1-9-like"/>
</dbReference>
<dbReference type="InterPro" id="IPR000276">
    <property type="entry name" value="GPCR_Rhodpsn"/>
</dbReference>
<dbReference type="InterPro" id="IPR017452">
    <property type="entry name" value="GPCR_Rhodpsn_7TM"/>
</dbReference>
<dbReference type="PANTHER" id="PTHR10489:SF957">
    <property type="entry name" value="B2 BRADYKININ RECEPTOR"/>
    <property type="match status" value="1"/>
</dbReference>
<dbReference type="PANTHER" id="PTHR10489">
    <property type="entry name" value="CELL ADHESION MOLECULE"/>
    <property type="match status" value="1"/>
</dbReference>
<dbReference type="Pfam" id="PF00001">
    <property type="entry name" value="7tm_1"/>
    <property type="match status" value="1"/>
</dbReference>
<dbReference type="PRINTS" id="PR00425">
    <property type="entry name" value="BRADYKININR"/>
</dbReference>
<dbReference type="PRINTS" id="PR00993">
    <property type="entry name" value="BRADYKINNB1R"/>
</dbReference>
<dbReference type="PRINTS" id="PR00237">
    <property type="entry name" value="GPCRRHODOPSN"/>
</dbReference>
<dbReference type="SUPFAM" id="SSF81321">
    <property type="entry name" value="Family A G protein-coupled receptor-like"/>
    <property type="match status" value="1"/>
</dbReference>
<dbReference type="PROSITE" id="PS50262">
    <property type="entry name" value="G_PROTEIN_RECEP_F1_2"/>
    <property type="match status" value="1"/>
</dbReference>
<reference key="1">
    <citation type="submission" date="2002-08" db="EMBL/GenBank/DDBJ databases">
        <title>Orthologs of human receptors and methods of use.</title>
        <authorList>
            <person name="Horlick R.A."/>
            <person name="Zhao J."/>
            <person name="Swanson R.N."/>
            <person name="Webb M.L."/>
            <person name="Strohl B."/>
            <person name="Baldwin J.J."/>
            <person name="Auld D.S."/>
        </authorList>
    </citation>
    <scope>NUCLEOTIDE SEQUENCE [GENOMIC DNA]</scope>
</reference>
<accession>Q8HZP1</accession>
<name>BKRB1_TUPMI</name>
<feature type="chain" id="PRO_0000069188" description="B1 bradykinin receptor">
    <location>
        <begin position="1"/>
        <end position="352"/>
    </location>
</feature>
<feature type="topological domain" description="Extracellular" evidence="2">
    <location>
        <begin position="1"/>
        <end position="41"/>
    </location>
</feature>
<feature type="transmembrane region" description="Helical; Name=1" evidence="2">
    <location>
        <begin position="42"/>
        <end position="62"/>
    </location>
</feature>
<feature type="topological domain" description="Cytoplasmic" evidence="2">
    <location>
        <begin position="63"/>
        <end position="72"/>
    </location>
</feature>
<feature type="transmembrane region" description="Helical; Name=2" evidence="2">
    <location>
        <begin position="73"/>
        <end position="93"/>
    </location>
</feature>
<feature type="topological domain" description="Extracellular" evidence="2">
    <location>
        <begin position="94"/>
        <end position="110"/>
    </location>
</feature>
<feature type="transmembrane region" description="Helical; Name=3" evidence="2">
    <location>
        <begin position="111"/>
        <end position="131"/>
    </location>
</feature>
<feature type="topological domain" description="Cytoplasmic" evidence="2">
    <location>
        <begin position="132"/>
        <end position="153"/>
    </location>
</feature>
<feature type="transmembrane region" description="Helical; Name=4" evidence="2">
    <location>
        <begin position="154"/>
        <end position="174"/>
    </location>
</feature>
<feature type="topological domain" description="Extracellular" evidence="2">
    <location>
        <begin position="175"/>
        <end position="206"/>
    </location>
</feature>
<feature type="transmembrane region" description="Helical; Name=5" evidence="2">
    <location>
        <begin position="207"/>
        <end position="227"/>
    </location>
</feature>
<feature type="topological domain" description="Cytoplasmic" evidence="2">
    <location>
        <begin position="228"/>
        <end position="250"/>
    </location>
</feature>
<feature type="transmembrane region" description="Helical; Name=6" evidence="2">
    <location>
        <begin position="251"/>
        <end position="271"/>
    </location>
</feature>
<feature type="topological domain" description="Extracellular" evidence="2">
    <location>
        <begin position="272"/>
        <end position="294"/>
    </location>
</feature>
<feature type="transmembrane region" description="Helical; Name=7" evidence="2">
    <location>
        <begin position="295"/>
        <end position="315"/>
    </location>
</feature>
<feature type="topological domain" description="Cytoplasmic" evidence="2">
    <location>
        <begin position="316"/>
        <end position="326"/>
    </location>
</feature>
<feature type="lipid moiety-binding region" description="S-palmitoyl cysteine" evidence="2">
    <location>
        <position position="329"/>
    </location>
</feature>
<feature type="glycosylation site" description="N-linked (GlcNAc...) asparagine" evidence="2">
    <location>
        <position position="13"/>
    </location>
</feature>
<feature type="glycosylation site" description="N-linked (GlcNAc...) asparagine" evidence="2">
    <location>
        <position position="21"/>
    </location>
</feature>
<feature type="glycosylation site" description="N-linked (GlcNAc...) asparagine" evidence="2">
    <location>
        <position position="184"/>
    </location>
</feature>
<feature type="disulfide bond" evidence="3">
    <location>
        <begin position="109"/>
        <end position="188"/>
    </location>
</feature>
<proteinExistence type="inferred from homology"/>
<gene>
    <name type="primary">BDKRB1</name>
</gene>
<keyword id="KW-1003">Cell membrane</keyword>
<keyword id="KW-1015">Disulfide bond</keyword>
<keyword id="KW-0297">G-protein coupled receptor</keyword>
<keyword id="KW-0325">Glycoprotein</keyword>
<keyword id="KW-0449">Lipoprotein</keyword>
<keyword id="KW-0472">Membrane</keyword>
<keyword id="KW-0564">Palmitate</keyword>
<keyword id="KW-0675">Receptor</keyword>
<keyword id="KW-0807">Transducer</keyword>
<keyword id="KW-0812">Transmembrane</keyword>
<keyword id="KW-1133">Transmembrane helix</keyword>
<protein>
    <recommendedName>
        <fullName>B1 bradykinin receptor</fullName>
        <shortName>B1R</shortName>
        <shortName>BK-1 receptor</shortName>
    </recommendedName>
</protein>
<organism>
    <name type="scientific">Tupaia minor</name>
    <name type="common">Pigmy tree shrew</name>
    <dbReference type="NCBI Taxonomy" id="143289"/>
    <lineage>
        <taxon>Eukaryota</taxon>
        <taxon>Metazoa</taxon>
        <taxon>Chordata</taxon>
        <taxon>Craniata</taxon>
        <taxon>Vertebrata</taxon>
        <taxon>Euteleostomi</taxon>
        <taxon>Mammalia</taxon>
        <taxon>Eutheria</taxon>
        <taxon>Euarchontoglires</taxon>
        <taxon>Scandentia</taxon>
        <taxon>Tupaiidae</taxon>
        <taxon>Tupaia</taxon>
    </lineage>
</organism>
<sequence>MAAQTLLELQPSNQSQLSALNTTSCDNAREAWDLLYQVLPIFILTICAFGLLGNLFVLSVFLLLRRRLTVAEIYLVNLAASDLVFVLGLPFWAQNIWNQFNWPFGDLLCRVVNGVIKANLFISIFLMVAISQDRYCVLVHPMASRRRRRRRRARATCMVIWAVGALLSTPTFLLRSVSAVQDLNISACILLLPHQAWHVARIVELNVLGFLLPLAAIIFFNGHILASLRGQGEVSQTRIGGPKDCKTTVLILTLVAAFLVCWAPYHCFAFLEFLFQVRAVRGCFWEDFIDLGLQLANFFAFTNSCLNPVIYVFVGRLFRTKVWELYQQCTPRRPAPLSSSRRKEILRRFWRN</sequence>
<comment type="function">
    <text evidence="1">This is a receptor for bradykinin. Could be a factor in chronic pain and inflammation.</text>
</comment>
<comment type="subcellular location">
    <subcellularLocation>
        <location evidence="1">Cell membrane</location>
        <topology evidence="2">Multi-pass membrane protein</topology>
    </subcellularLocation>
</comment>
<comment type="similarity">
    <text evidence="3">Belongs to the G-protein coupled receptor 1 family. Bradykinin receptor subfamily. BDKRB1 sub-subfamily.</text>
</comment>